<evidence type="ECO:0000255" key="1">
    <source>
        <dbReference type="HAMAP-Rule" id="MF_00522"/>
    </source>
</evidence>
<feature type="chain" id="PRO_0000207804" description="Photosystem I reaction center subunit IX">
    <location>
        <begin position="1"/>
        <end position="42"/>
    </location>
</feature>
<feature type="transmembrane region" description="Helical" evidence="1">
    <location>
        <begin position="7"/>
        <end position="27"/>
    </location>
</feature>
<reference key="1">
    <citation type="journal article" date="2004" name="DNA Res.">
        <title>Complete chloroplast genome sequence from Korea ginseng (Panax schinseng Nees) and comparative analysis of sequence evolution among 17 vascular plants.</title>
        <authorList>
            <person name="Kim K.-J."/>
            <person name="Lee H.-L."/>
        </authorList>
    </citation>
    <scope>NUCLEOTIDE SEQUENCE [LARGE SCALE GENOMIC DNA]</scope>
</reference>
<proteinExistence type="inferred from homology"/>
<sequence>MRDLKTYLSVAPVLSTLWFGSLAGLLIEINRFFPDALTFPFF</sequence>
<comment type="function">
    <text evidence="1">May help in the organization of the PsaE and PsaF subunits.</text>
</comment>
<comment type="subcellular location">
    <subcellularLocation>
        <location evidence="1">Plastid</location>
        <location evidence="1">Chloroplast thylakoid membrane</location>
        <topology evidence="1">Single-pass membrane protein</topology>
    </subcellularLocation>
</comment>
<comment type="similarity">
    <text evidence="1">Belongs to the PsaJ family.</text>
</comment>
<keyword id="KW-0150">Chloroplast</keyword>
<keyword id="KW-0472">Membrane</keyword>
<keyword id="KW-0602">Photosynthesis</keyword>
<keyword id="KW-0603">Photosystem I</keyword>
<keyword id="KW-0934">Plastid</keyword>
<keyword id="KW-0793">Thylakoid</keyword>
<keyword id="KW-0812">Transmembrane</keyword>
<keyword id="KW-1133">Transmembrane helix</keyword>
<dbReference type="EMBL" id="AY582139">
    <property type="protein sequence ID" value="AAT98529.1"/>
    <property type="molecule type" value="Genomic_DNA"/>
</dbReference>
<dbReference type="RefSeq" id="YP_086986.1">
    <property type="nucleotide sequence ID" value="NC_006290.1"/>
</dbReference>
<dbReference type="SMR" id="Q68RY6"/>
<dbReference type="GeneID" id="3021564"/>
<dbReference type="GO" id="GO:0009535">
    <property type="term" value="C:chloroplast thylakoid membrane"/>
    <property type="evidence" value="ECO:0007669"/>
    <property type="project" value="UniProtKB-SubCell"/>
</dbReference>
<dbReference type="GO" id="GO:0009522">
    <property type="term" value="C:photosystem I"/>
    <property type="evidence" value="ECO:0007669"/>
    <property type="project" value="UniProtKB-KW"/>
</dbReference>
<dbReference type="GO" id="GO:0015979">
    <property type="term" value="P:photosynthesis"/>
    <property type="evidence" value="ECO:0007669"/>
    <property type="project" value="UniProtKB-UniRule"/>
</dbReference>
<dbReference type="FunFam" id="1.20.5.510:FF:000001">
    <property type="entry name" value="Photosystem I reaction center subunit IX"/>
    <property type="match status" value="1"/>
</dbReference>
<dbReference type="Gene3D" id="1.20.5.510">
    <property type="entry name" value="Single helix bin"/>
    <property type="match status" value="1"/>
</dbReference>
<dbReference type="HAMAP" id="MF_00522">
    <property type="entry name" value="PSI_PsaJ"/>
    <property type="match status" value="1"/>
</dbReference>
<dbReference type="InterPro" id="IPR002615">
    <property type="entry name" value="PSI_PsaJ"/>
</dbReference>
<dbReference type="InterPro" id="IPR036062">
    <property type="entry name" value="PSI_PsaJ_sf"/>
</dbReference>
<dbReference type="PANTHER" id="PTHR36082">
    <property type="match status" value="1"/>
</dbReference>
<dbReference type="PANTHER" id="PTHR36082:SF2">
    <property type="entry name" value="PHOTOSYSTEM I REACTION CENTER SUBUNIT IX"/>
    <property type="match status" value="1"/>
</dbReference>
<dbReference type="Pfam" id="PF01701">
    <property type="entry name" value="PSI_PsaJ"/>
    <property type="match status" value="1"/>
</dbReference>
<dbReference type="SUPFAM" id="SSF81544">
    <property type="entry name" value="Subunit IX of photosystem I reaction centre, PsaJ"/>
    <property type="match status" value="1"/>
</dbReference>
<accession>Q68RY6</accession>
<gene>
    <name evidence="1" type="primary">psaJ</name>
    <name type="ORF">PSC0690</name>
</gene>
<protein>
    <recommendedName>
        <fullName evidence="1">Photosystem I reaction center subunit IX</fullName>
    </recommendedName>
    <alternativeName>
        <fullName evidence="1">PSI-J</fullName>
    </alternativeName>
</protein>
<organism>
    <name type="scientific">Panax ginseng</name>
    <name type="common">Korean ginseng</name>
    <dbReference type="NCBI Taxonomy" id="4054"/>
    <lineage>
        <taxon>Eukaryota</taxon>
        <taxon>Viridiplantae</taxon>
        <taxon>Streptophyta</taxon>
        <taxon>Embryophyta</taxon>
        <taxon>Tracheophyta</taxon>
        <taxon>Spermatophyta</taxon>
        <taxon>Magnoliopsida</taxon>
        <taxon>eudicotyledons</taxon>
        <taxon>Gunneridae</taxon>
        <taxon>Pentapetalae</taxon>
        <taxon>asterids</taxon>
        <taxon>campanulids</taxon>
        <taxon>Apiales</taxon>
        <taxon>Araliaceae</taxon>
        <taxon>Panax</taxon>
    </lineage>
</organism>
<geneLocation type="chloroplast"/>
<name>PSAJ_PANGI</name>